<proteinExistence type="inferred from homology"/>
<sequence length="345" mass="37272">MIRVAIAGATGYTGAELVKLITGHKEAKLAAVTSQSYSGRAIQEIFPAMRGVVDLVCEPLDINAISQRVDCVFLALPHKVSMGYAPQFIENKVKVVDLSADFRFQNASAYEAAYQEHSAKSLLNEAVYGLCELYRDKIAGSNLVGNPGCYPTSVLLPLVPLVRKGLVETCGIISDSKSGVSGAGRAPSLGSHFCEVNESFKPYKIGNHRHVPEMEEVISLEANEPVSITFVPHLLPLTRGMLSTIYARVTTGTTQSMIRTALMDQYDSDTFVRVLPQGEFPDIRHVRGTNFCDIGFHLDPGSGQLILVSAIDNLLKGAAGQAVQNMNILFGLEEQTGLELFPGAL</sequence>
<organism>
    <name type="scientific">Desulforapulum autotrophicum (strain ATCC 43914 / DSM 3382 / VKM B-1955 / HRM2)</name>
    <name type="common">Desulfobacterium autotrophicum</name>
    <dbReference type="NCBI Taxonomy" id="177437"/>
    <lineage>
        <taxon>Bacteria</taxon>
        <taxon>Pseudomonadati</taxon>
        <taxon>Thermodesulfobacteriota</taxon>
        <taxon>Desulfobacteria</taxon>
        <taxon>Desulfobacterales</taxon>
        <taxon>Desulfobacteraceae</taxon>
        <taxon>Desulforapulum</taxon>
    </lineage>
</organism>
<gene>
    <name evidence="1" type="primary">argC</name>
    <name type="ordered locus">HRM2_26630</name>
</gene>
<dbReference type="EC" id="1.2.1.38" evidence="1"/>
<dbReference type="EMBL" id="CP001087">
    <property type="protein sequence ID" value="ACN15757.1"/>
    <property type="molecule type" value="Genomic_DNA"/>
</dbReference>
<dbReference type="RefSeq" id="WP_015904520.1">
    <property type="nucleotide sequence ID" value="NC_012108.1"/>
</dbReference>
<dbReference type="SMR" id="C0QI21"/>
<dbReference type="STRING" id="177437.HRM2_26630"/>
<dbReference type="KEGG" id="dat:HRM2_26630"/>
<dbReference type="eggNOG" id="COG0002">
    <property type="taxonomic scope" value="Bacteria"/>
</dbReference>
<dbReference type="HOGENOM" id="CLU_006384_0_1_7"/>
<dbReference type="OrthoDB" id="9801289at2"/>
<dbReference type="UniPathway" id="UPA00068">
    <property type="reaction ID" value="UER00108"/>
</dbReference>
<dbReference type="Proteomes" id="UP000000442">
    <property type="component" value="Chromosome"/>
</dbReference>
<dbReference type="GO" id="GO:0005737">
    <property type="term" value="C:cytoplasm"/>
    <property type="evidence" value="ECO:0007669"/>
    <property type="project" value="UniProtKB-SubCell"/>
</dbReference>
<dbReference type="GO" id="GO:0003942">
    <property type="term" value="F:N-acetyl-gamma-glutamyl-phosphate reductase activity"/>
    <property type="evidence" value="ECO:0007669"/>
    <property type="project" value="UniProtKB-UniRule"/>
</dbReference>
<dbReference type="GO" id="GO:0051287">
    <property type="term" value="F:NAD binding"/>
    <property type="evidence" value="ECO:0007669"/>
    <property type="project" value="InterPro"/>
</dbReference>
<dbReference type="GO" id="GO:0070401">
    <property type="term" value="F:NADP+ binding"/>
    <property type="evidence" value="ECO:0007669"/>
    <property type="project" value="InterPro"/>
</dbReference>
<dbReference type="GO" id="GO:0006526">
    <property type="term" value="P:L-arginine biosynthetic process"/>
    <property type="evidence" value="ECO:0007669"/>
    <property type="project" value="UniProtKB-UniRule"/>
</dbReference>
<dbReference type="CDD" id="cd23934">
    <property type="entry name" value="AGPR_1_C"/>
    <property type="match status" value="1"/>
</dbReference>
<dbReference type="CDD" id="cd17895">
    <property type="entry name" value="AGPR_1_N"/>
    <property type="match status" value="1"/>
</dbReference>
<dbReference type="FunFam" id="3.30.360.10:FF:000014">
    <property type="entry name" value="N-acetyl-gamma-glutamyl-phosphate reductase"/>
    <property type="match status" value="1"/>
</dbReference>
<dbReference type="Gene3D" id="3.30.360.10">
    <property type="entry name" value="Dihydrodipicolinate Reductase, domain 2"/>
    <property type="match status" value="1"/>
</dbReference>
<dbReference type="Gene3D" id="3.40.50.720">
    <property type="entry name" value="NAD(P)-binding Rossmann-like Domain"/>
    <property type="match status" value="1"/>
</dbReference>
<dbReference type="HAMAP" id="MF_00150">
    <property type="entry name" value="ArgC_type1"/>
    <property type="match status" value="1"/>
</dbReference>
<dbReference type="InterPro" id="IPR023013">
    <property type="entry name" value="AGPR_AS"/>
</dbReference>
<dbReference type="InterPro" id="IPR000706">
    <property type="entry name" value="AGPR_type-1"/>
</dbReference>
<dbReference type="InterPro" id="IPR036291">
    <property type="entry name" value="NAD(P)-bd_dom_sf"/>
</dbReference>
<dbReference type="InterPro" id="IPR050085">
    <property type="entry name" value="NAGSA_dehydrogenase"/>
</dbReference>
<dbReference type="InterPro" id="IPR000534">
    <property type="entry name" value="Semialdehyde_DH_NAD-bd"/>
</dbReference>
<dbReference type="NCBIfam" id="TIGR01850">
    <property type="entry name" value="argC"/>
    <property type="match status" value="1"/>
</dbReference>
<dbReference type="PANTHER" id="PTHR32338:SF10">
    <property type="entry name" value="N-ACETYL-GAMMA-GLUTAMYL-PHOSPHATE REDUCTASE, CHLOROPLASTIC-RELATED"/>
    <property type="match status" value="1"/>
</dbReference>
<dbReference type="PANTHER" id="PTHR32338">
    <property type="entry name" value="N-ACETYL-GAMMA-GLUTAMYL-PHOSPHATE REDUCTASE, CHLOROPLASTIC-RELATED-RELATED"/>
    <property type="match status" value="1"/>
</dbReference>
<dbReference type="Pfam" id="PF01118">
    <property type="entry name" value="Semialdhyde_dh"/>
    <property type="match status" value="1"/>
</dbReference>
<dbReference type="Pfam" id="PF22698">
    <property type="entry name" value="Semialdhyde_dhC_1"/>
    <property type="match status" value="1"/>
</dbReference>
<dbReference type="SMART" id="SM00859">
    <property type="entry name" value="Semialdhyde_dh"/>
    <property type="match status" value="1"/>
</dbReference>
<dbReference type="SUPFAM" id="SSF55347">
    <property type="entry name" value="Glyceraldehyde-3-phosphate dehydrogenase-like, C-terminal domain"/>
    <property type="match status" value="1"/>
</dbReference>
<dbReference type="SUPFAM" id="SSF51735">
    <property type="entry name" value="NAD(P)-binding Rossmann-fold domains"/>
    <property type="match status" value="1"/>
</dbReference>
<dbReference type="PROSITE" id="PS01224">
    <property type="entry name" value="ARGC"/>
    <property type="match status" value="1"/>
</dbReference>
<accession>C0QI21</accession>
<keyword id="KW-0028">Amino-acid biosynthesis</keyword>
<keyword id="KW-0055">Arginine biosynthesis</keyword>
<keyword id="KW-0963">Cytoplasm</keyword>
<keyword id="KW-0521">NADP</keyword>
<keyword id="KW-0560">Oxidoreductase</keyword>
<keyword id="KW-1185">Reference proteome</keyword>
<reference key="1">
    <citation type="journal article" date="2009" name="Environ. Microbiol.">
        <title>Genome sequence of Desulfobacterium autotrophicum HRM2, a marine sulfate reducer oxidizing organic carbon completely to carbon dioxide.</title>
        <authorList>
            <person name="Strittmatter A.W."/>
            <person name="Liesegang H."/>
            <person name="Rabus R."/>
            <person name="Decker I."/>
            <person name="Amann J."/>
            <person name="Andres S."/>
            <person name="Henne A."/>
            <person name="Fricke W.F."/>
            <person name="Martinez-Arias R."/>
            <person name="Bartels D."/>
            <person name="Goesmann A."/>
            <person name="Krause L."/>
            <person name="Puehler A."/>
            <person name="Klenk H.P."/>
            <person name="Richter M."/>
            <person name="Schuler M."/>
            <person name="Gloeckner F.O."/>
            <person name="Meyerdierks A."/>
            <person name="Gottschalk G."/>
            <person name="Amann R."/>
        </authorList>
    </citation>
    <scope>NUCLEOTIDE SEQUENCE [LARGE SCALE GENOMIC DNA]</scope>
    <source>
        <strain>ATCC 43914 / DSM 3382 / VKM B-1955 / HRM2</strain>
    </source>
</reference>
<comment type="function">
    <text evidence="1">Catalyzes the NADPH-dependent reduction of N-acetyl-5-glutamyl phosphate to yield N-acetyl-L-glutamate 5-semialdehyde.</text>
</comment>
<comment type="catalytic activity">
    <reaction evidence="1">
        <text>N-acetyl-L-glutamate 5-semialdehyde + phosphate + NADP(+) = N-acetyl-L-glutamyl 5-phosphate + NADPH + H(+)</text>
        <dbReference type="Rhea" id="RHEA:21588"/>
        <dbReference type="ChEBI" id="CHEBI:15378"/>
        <dbReference type="ChEBI" id="CHEBI:29123"/>
        <dbReference type="ChEBI" id="CHEBI:43474"/>
        <dbReference type="ChEBI" id="CHEBI:57783"/>
        <dbReference type="ChEBI" id="CHEBI:57936"/>
        <dbReference type="ChEBI" id="CHEBI:58349"/>
        <dbReference type="EC" id="1.2.1.38"/>
    </reaction>
</comment>
<comment type="pathway">
    <text evidence="1">Amino-acid biosynthesis; L-arginine biosynthesis; N(2)-acetyl-L-ornithine from L-glutamate: step 3/4.</text>
</comment>
<comment type="subcellular location">
    <subcellularLocation>
        <location evidence="1">Cytoplasm</location>
    </subcellularLocation>
</comment>
<comment type="similarity">
    <text evidence="1">Belongs to the NAGSA dehydrogenase family. Type 1 subfamily.</text>
</comment>
<feature type="chain" id="PRO_1000203402" description="N-acetyl-gamma-glutamyl-phosphate reductase">
    <location>
        <begin position="1"/>
        <end position="345"/>
    </location>
</feature>
<feature type="active site" evidence="1">
    <location>
        <position position="149"/>
    </location>
</feature>
<name>ARGC_DESAH</name>
<protein>
    <recommendedName>
        <fullName evidence="1">N-acetyl-gamma-glutamyl-phosphate reductase</fullName>
        <shortName evidence="1">AGPR</shortName>
        <ecNumber evidence="1">1.2.1.38</ecNumber>
    </recommendedName>
    <alternativeName>
        <fullName evidence="1">N-acetyl-glutamate semialdehyde dehydrogenase</fullName>
        <shortName evidence="1">NAGSA dehydrogenase</shortName>
    </alternativeName>
</protein>
<evidence type="ECO:0000255" key="1">
    <source>
        <dbReference type="HAMAP-Rule" id="MF_00150"/>
    </source>
</evidence>